<organism>
    <name type="scientific">Clostridium perfringens (strain 13 / Type A)</name>
    <dbReference type="NCBI Taxonomy" id="195102"/>
    <lineage>
        <taxon>Bacteria</taxon>
        <taxon>Bacillati</taxon>
        <taxon>Bacillota</taxon>
        <taxon>Clostridia</taxon>
        <taxon>Eubacteriales</taxon>
        <taxon>Clostridiaceae</taxon>
        <taxon>Clostridium</taxon>
    </lineage>
</organism>
<keyword id="KW-1003">Cell membrane</keyword>
<keyword id="KW-0378">Hydrolase</keyword>
<keyword id="KW-0472">Membrane</keyword>
<keyword id="KW-0645">Protease</keyword>
<keyword id="KW-0673">Quorum sensing</keyword>
<keyword id="KW-1185">Reference proteome</keyword>
<keyword id="KW-0812">Transmembrane</keyword>
<keyword id="KW-1133">Transmembrane helix</keyword>
<sequence>MIENISKLIAEKVSSELNYDNERKEIIQYGTYALIQTLISIISVLILGLVFNIALEALIFLFTASILRKYSGGAHSESSNVCTLLGIIISICIGFLIKSSFFAKMNFELVVFIGIVIFVFGYFIVFKFAPVDTKNKPIKTEKKKKRMKKGSLKILTIYLFIEVLSIILYYNSGWSLAKPVMLSIIFGVAWQCMTLTYIGNILLKTIDSFTNKLL</sequence>
<reference key="1">
    <citation type="journal article" date="2002" name="Proc. Natl. Acad. Sci. U.S.A.">
        <title>Complete genome sequence of Clostridium perfringens, an anaerobic flesh-eater.</title>
        <authorList>
            <person name="Shimizu T."/>
            <person name="Ohtani K."/>
            <person name="Hirakawa H."/>
            <person name="Ohshima K."/>
            <person name="Yamashita A."/>
            <person name="Shiba T."/>
            <person name="Ogasawara N."/>
            <person name="Hattori M."/>
            <person name="Kuhara S."/>
            <person name="Hayashi H."/>
        </authorList>
    </citation>
    <scope>NUCLEOTIDE SEQUENCE [LARGE SCALE GENOMIC DNA]</scope>
    <source>
        <strain>13 / Type A</strain>
    </source>
</reference>
<accession>Q8XK42</accession>
<feature type="chain" id="PRO_0000168138" description="Putative AgrB-like protein 2">
    <location>
        <begin position="1"/>
        <end position="214"/>
    </location>
</feature>
<feature type="transmembrane region" description="Helical" evidence="1">
    <location>
        <begin position="41"/>
        <end position="61"/>
    </location>
</feature>
<feature type="transmembrane region" description="Helical" evidence="1">
    <location>
        <begin position="83"/>
        <end position="103"/>
    </location>
</feature>
<feature type="transmembrane region" description="Helical" evidence="1">
    <location>
        <begin position="109"/>
        <end position="129"/>
    </location>
</feature>
<feature type="transmembrane region" description="Helical" evidence="1">
    <location>
        <begin position="154"/>
        <end position="174"/>
    </location>
</feature>
<feature type="transmembrane region" description="Helical" evidence="1">
    <location>
        <begin position="179"/>
        <end position="199"/>
    </location>
</feature>
<protein>
    <recommendedName>
        <fullName evidence="1">Putative AgrB-like protein 2</fullName>
        <ecNumber evidence="1">3.4.-.-</ecNumber>
    </recommendedName>
</protein>
<dbReference type="EC" id="3.4.-.-" evidence="1"/>
<dbReference type="EMBL" id="BA000016">
    <property type="protein sequence ID" value="BAB81267.1"/>
    <property type="molecule type" value="Genomic_DNA"/>
</dbReference>
<dbReference type="RefSeq" id="WP_003455887.1">
    <property type="nucleotide sequence ID" value="NC_003366.1"/>
</dbReference>
<dbReference type="SMR" id="Q8XK42"/>
<dbReference type="STRING" id="195102.gene:10490825"/>
<dbReference type="KEGG" id="cpe:CPE1561"/>
<dbReference type="HOGENOM" id="CLU_098969_0_1_9"/>
<dbReference type="PHI-base" id="PHI:7720"/>
<dbReference type="Proteomes" id="UP000000818">
    <property type="component" value="Chromosome"/>
</dbReference>
<dbReference type="GO" id="GO:0005886">
    <property type="term" value="C:plasma membrane"/>
    <property type="evidence" value="ECO:0007669"/>
    <property type="project" value="UniProtKB-SubCell"/>
</dbReference>
<dbReference type="GO" id="GO:0008233">
    <property type="term" value="F:peptidase activity"/>
    <property type="evidence" value="ECO:0007669"/>
    <property type="project" value="UniProtKB-UniRule"/>
</dbReference>
<dbReference type="GO" id="GO:0006508">
    <property type="term" value="P:proteolysis"/>
    <property type="evidence" value="ECO:0007669"/>
    <property type="project" value="UniProtKB-KW"/>
</dbReference>
<dbReference type="GO" id="GO:0009372">
    <property type="term" value="P:quorum sensing"/>
    <property type="evidence" value="ECO:0007669"/>
    <property type="project" value="UniProtKB-UniRule"/>
</dbReference>
<dbReference type="HAMAP" id="MF_00784">
    <property type="entry name" value="AgrB"/>
    <property type="match status" value="1"/>
</dbReference>
<dbReference type="InterPro" id="IPR006741">
    <property type="entry name" value="AgrB"/>
</dbReference>
<dbReference type="Pfam" id="PF04647">
    <property type="entry name" value="AgrB"/>
    <property type="match status" value="1"/>
</dbReference>
<dbReference type="SMART" id="SM00793">
    <property type="entry name" value="AgrB"/>
    <property type="match status" value="1"/>
</dbReference>
<name>AGRB2_CLOPE</name>
<comment type="function">
    <text evidence="1">May be involved in the proteolytic processing of a quorum sensing system signal molecule precursor.</text>
</comment>
<comment type="subcellular location">
    <subcellularLocation>
        <location evidence="1">Cell membrane</location>
        <topology evidence="1">Multi-pass membrane protein</topology>
    </subcellularLocation>
</comment>
<comment type="similarity">
    <text evidence="1">Belongs to the AgrB family.</text>
</comment>
<evidence type="ECO:0000255" key="1">
    <source>
        <dbReference type="HAMAP-Rule" id="MF_00784"/>
    </source>
</evidence>
<gene>
    <name type="ordered locus">CPE1561</name>
</gene>
<proteinExistence type="inferred from homology"/>